<organism>
    <name type="scientific">Mycobacterium avium (strain 104)</name>
    <dbReference type="NCBI Taxonomy" id="243243"/>
    <lineage>
        <taxon>Bacteria</taxon>
        <taxon>Bacillati</taxon>
        <taxon>Actinomycetota</taxon>
        <taxon>Actinomycetes</taxon>
        <taxon>Mycobacteriales</taxon>
        <taxon>Mycobacteriaceae</taxon>
        <taxon>Mycobacterium</taxon>
        <taxon>Mycobacterium avium complex (MAC)</taxon>
    </lineage>
</organism>
<proteinExistence type="evidence at protein level"/>
<feature type="chain" id="PRO_0000302939" description="S-adenosylmethionine synthase">
    <location>
        <begin position="1"/>
        <end position="403"/>
    </location>
</feature>
<feature type="region of interest" description="Flexible loop" evidence="1">
    <location>
        <begin position="104"/>
        <end position="114"/>
    </location>
</feature>
<feature type="binding site" description="in other chain" evidence="1">
    <location>
        <position position="17"/>
    </location>
    <ligand>
        <name>ATP</name>
        <dbReference type="ChEBI" id="CHEBI:30616"/>
        <note>ligand shared between two neighboring subunits</note>
    </ligand>
</feature>
<feature type="binding site" evidence="1">
    <location>
        <position position="19"/>
    </location>
    <ligand>
        <name>Mg(2+)</name>
        <dbReference type="ChEBI" id="CHEBI:18420"/>
    </ligand>
</feature>
<feature type="binding site" evidence="1">
    <location>
        <position position="45"/>
    </location>
    <ligand>
        <name>K(+)</name>
        <dbReference type="ChEBI" id="CHEBI:29103"/>
    </ligand>
</feature>
<feature type="binding site" description="in other chain" evidence="1">
    <location>
        <position position="58"/>
    </location>
    <ligand>
        <name>L-methionine</name>
        <dbReference type="ChEBI" id="CHEBI:57844"/>
        <note>ligand shared between two neighboring subunits</note>
    </ligand>
</feature>
<feature type="binding site" description="in other chain" evidence="1">
    <location>
        <position position="104"/>
    </location>
    <ligand>
        <name>L-methionine</name>
        <dbReference type="ChEBI" id="CHEBI:57844"/>
        <note>ligand shared between two neighboring subunits</note>
    </ligand>
</feature>
<feature type="binding site" description="in other chain" evidence="1">
    <location>
        <begin position="179"/>
        <end position="181"/>
    </location>
    <ligand>
        <name>ATP</name>
        <dbReference type="ChEBI" id="CHEBI:30616"/>
        <note>ligand shared between two neighboring subunits</note>
    </ligand>
</feature>
<feature type="binding site" description="in other chain" evidence="1">
    <location>
        <begin position="250"/>
        <end position="251"/>
    </location>
    <ligand>
        <name>ATP</name>
        <dbReference type="ChEBI" id="CHEBI:30616"/>
        <note>ligand shared between two neighboring subunits</note>
    </ligand>
</feature>
<feature type="binding site" evidence="1">
    <location>
        <position position="259"/>
    </location>
    <ligand>
        <name>ATP</name>
        <dbReference type="ChEBI" id="CHEBI:30616"/>
        <note>ligand shared between two neighboring subunits</note>
    </ligand>
</feature>
<feature type="binding site" evidence="1">
    <location>
        <position position="259"/>
    </location>
    <ligand>
        <name>L-methionine</name>
        <dbReference type="ChEBI" id="CHEBI:57844"/>
        <note>ligand shared between two neighboring subunits</note>
    </ligand>
</feature>
<feature type="binding site" description="in other chain" evidence="1">
    <location>
        <begin position="265"/>
        <end position="266"/>
    </location>
    <ligand>
        <name>ATP</name>
        <dbReference type="ChEBI" id="CHEBI:30616"/>
        <note>ligand shared between two neighboring subunits</note>
    </ligand>
</feature>
<feature type="binding site" evidence="1">
    <location>
        <position position="282"/>
    </location>
    <ligand>
        <name>ATP</name>
        <dbReference type="ChEBI" id="CHEBI:30616"/>
        <note>ligand shared between two neighboring subunits</note>
    </ligand>
</feature>
<feature type="binding site" evidence="1">
    <location>
        <position position="286"/>
    </location>
    <ligand>
        <name>ATP</name>
        <dbReference type="ChEBI" id="CHEBI:30616"/>
        <note>ligand shared between two neighboring subunits</note>
    </ligand>
</feature>
<feature type="binding site" description="in other chain" evidence="1">
    <location>
        <position position="290"/>
    </location>
    <ligand>
        <name>L-methionine</name>
        <dbReference type="ChEBI" id="CHEBI:57844"/>
        <note>ligand shared between two neighboring subunits</note>
    </ligand>
</feature>
<feature type="strand" evidence="3">
    <location>
        <begin position="6"/>
        <end position="13"/>
    </location>
</feature>
<feature type="helix" evidence="3">
    <location>
        <begin position="18"/>
        <end position="36"/>
    </location>
</feature>
<feature type="strand" evidence="3">
    <location>
        <begin position="41"/>
        <end position="49"/>
    </location>
</feature>
<feature type="strand" evidence="3">
    <location>
        <begin position="52"/>
        <end position="60"/>
    </location>
</feature>
<feature type="helix" evidence="3">
    <location>
        <begin position="64"/>
        <end position="68"/>
    </location>
</feature>
<feature type="helix" evidence="3">
    <location>
        <begin position="70"/>
        <end position="81"/>
    </location>
</feature>
<feature type="helix" evidence="3">
    <location>
        <begin position="86"/>
        <end position="88"/>
    </location>
</feature>
<feature type="turn" evidence="3">
    <location>
        <begin position="92"/>
        <end position="94"/>
    </location>
</feature>
<feature type="strand" evidence="3">
    <location>
        <begin position="95"/>
        <end position="104"/>
    </location>
</feature>
<feature type="strand" evidence="3">
    <location>
        <begin position="136"/>
        <end position="143"/>
    </location>
</feature>
<feature type="helix" evidence="3">
    <location>
        <begin position="152"/>
        <end position="169"/>
    </location>
</feature>
<feature type="strand" evidence="3">
    <location>
        <begin position="171"/>
        <end position="173"/>
    </location>
</feature>
<feature type="strand" evidence="3">
    <location>
        <begin position="176"/>
        <end position="189"/>
    </location>
</feature>
<feature type="strand" evidence="3">
    <location>
        <begin position="192"/>
        <end position="205"/>
    </location>
</feature>
<feature type="turn" evidence="3">
    <location>
        <begin position="211"/>
        <end position="214"/>
    </location>
</feature>
<feature type="helix" evidence="3">
    <location>
        <begin position="215"/>
        <end position="222"/>
    </location>
</feature>
<feature type="helix" evidence="3">
    <location>
        <begin position="224"/>
        <end position="231"/>
    </location>
</feature>
<feature type="strand" evidence="3">
    <location>
        <begin position="242"/>
        <end position="246"/>
    </location>
</feature>
<feature type="turn" evidence="3">
    <location>
        <begin position="255"/>
        <end position="258"/>
    </location>
</feature>
<feature type="strand" evidence="3">
    <location>
        <begin position="259"/>
        <end position="262"/>
    </location>
</feature>
<feature type="turn" evidence="3">
    <location>
        <begin position="267"/>
        <end position="274"/>
    </location>
</feature>
<feature type="helix" evidence="3">
    <location>
        <begin position="291"/>
        <end position="308"/>
    </location>
</feature>
<feature type="strand" evidence="3">
    <location>
        <begin position="313"/>
        <end position="321"/>
    </location>
</feature>
<feature type="strand" evidence="3">
    <location>
        <begin position="329"/>
        <end position="334"/>
    </location>
</feature>
<feature type="helix" evidence="3">
    <location>
        <begin position="343"/>
        <end position="353"/>
    </location>
</feature>
<feature type="helix" evidence="3">
    <location>
        <begin position="358"/>
        <end position="364"/>
    </location>
</feature>
<feature type="strand" evidence="3">
    <location>
        <begin position="368"/>
        <end position="370"/>
    </location>
</feature>
<feature type="helix" evidence="3">
    <location>
        <begin position="373"/>
        <end position="375"/>
    </location>
</feature>
<feature type="strand" evidence="3">
    <location>
        <begin position="376"/>
        <end position="378"/>
    </location>
</feature>
<feature type="strand" evidence="3">
    <location>
        <begin position="380"/>
        <end position="382"/>
    </location>
</feature>
<feature type="strand" evidence="3">
    <location>
        <begin position="384"/>
        <end position="386"/>
    </location>
</feature>
<feature type="helix" evidence="3">
    <location>
        <begin position="389"/>
        <end position="391"/>
    </location>
</feature>
<feature type="helix" evidence="3">
    <location>
        <begin position="396"/>
        <end position="402"/>
    </location>
</feature>
<comment type="function">
    <text evidence="1">Catalyzes the formation of S-adenosylmethionine (AdoMet) from methionine and ATP. The overall synthetic reaction is composed of two sequential steps, AdoMet formation and the subsequent tripolyphosphate hydrolysis which occurs prior to release of AdoMet from the enzyme.</text>
</comment>
<comment type="catalytic activity">
    <reaction evidence="1">
        <text>L-methionine + ATP + H2O = S-adenosyl-L-methionine + phosphate + diphosphate</text>
        <dbReference type="Rhea" id="RHEA:21080"/>
        <dbReference type="ChEBI" id="CHEBI:15377"/>
        <dbReference type="ChEBI" id="CHEBI:30616"/>
        <dbReference type="ChEBI" id="CHEBI:33019"/>
        <dbReference type="ChEBI" id="CHEBI:43474"/>
        <dbReference type="ChEBI" id="CHEBI:57844"/>
        <dbReference type="ChEBI" id="CHEBI:59789"/>
        <dbReference type="EC" id="2.5.1.6"/>
    </reaction>
</comment>
<comment type="cofactor">
    <cofactor evidence="1">
        <name>Mg(2+)</name>
        <dbReference type="ChEBI" id="CHEBI:18420"/>
    </cofactor>
    <text evidence="1">Binds 2 divalent ions per subunit.</text>
</comment>
<comment type="cofactor">
    <cofactor evidence="1">
        <name>K(+)</name>
        <dbReference type="ChEBI" id="CHEBI:29103"/>
    </cofactor>
    <text evidence="1">Binds 1 potassium ion per subunit.</text>
</comment>
<comment type="pathway">
    <text evidence="1">Amino-acid biosynthesis; S-adenosyl-L-methionine biosynthesis; S-adenosyl-L-methionine from L-methionine: step 1/1.</text>
</comment>
<comment type="subunit">
    <text evidence="1">Homotetramer; dimer of dimers.</text>
</comment>
<comment type="subcellular location">
    <subcellularLocation>
        <location evidence="1">Cytoplasm</location>
    </subcellularLocation>
</comment>
<comment type="similarity">
    <text evidence="1">Belongs to the AdoMet synthase family.</text>
</comment>
<accession>A0QI26</accession>
<reference key="1">
    <citation type="submission" date="2006-10" db="EMBL/GenBank/DDBJ databases">
        <authorList>
            <person name="Fleischmann R.D."/>
            <person name="Dodson R.J."/>
            <person name="Haft D.H."/>
            <person name="Merkel J.S."/>
            <person name="Nelson W.C."/>
            <person name="Fraser C.M."/>
        </authorList>
    </citation>
    <scope>NUCLEOTIDE SEQUENCE [LARGE SCALE GENOMIC DNA]</scope>
    <source>
        <strain>104</strain>
    </source>
</reference>
<reference evidence="2" key="2">
    <citation type="journal article" date="2015" name="Tuberculosis">
        <title>Increasing the structural coverage of tuberculosis drug targets.</title>
        <authorList>
            <person name="Baugh L."/>
            <person name="Phan I."/>
            <person name="Begley D.W."/>
            <person name="Clifton M.C."/>
            <person name="Armour B."/>
            <person name="Dranow D.M."/>
            <person name="Taylor B.M."/>
            <person name="Muruthi M.M."/>
            <person name="Abendroth J."/>
            <person name="Fairman J.W."/>
            <person name="Fox D. III"/>
            <person name="Dieterich S.H."/>
            <person name="Staker B.L."/>
            <person name="Gardberg A.S."/>
            <person name="Choi R."/>
            <person name="Hewitt S.N."/>
            <person name="Napuli A.J."/>
            <person name="Myers J."/>
            <person name="Barrett L.K."/>
            <person name="Zhang Y."/>
            <person name="Ferrell M."/>
            <person name="Mundt E."/>
            <person name="Thompkins K."/>
            <person name="Tran N."/>
            <person name="Lyons-Abbott S."/>
            <person name="Abramov A."/>
            <person name="Sekar A."/>
            <person name="Serbzhinskiy D."/>
            <person name="Lorimer D."/>
            <person name="Buchko G.W."/>
            <person name="Stacy R."/>
            <person name="Stewart L.J."/>
            <person name="Edwards T.E."/>
            <person name="Van Voorhis W.C."/>
            <person name="Myler P.J."/>
        </authorList>
    </citation>
    <scope>X-RAY CRYSTALLOGRAPHY (1.73 ANGSTROMS)</scope>
</reference>
<protein>
    <recommendedName>
        <fullName evidence="1">S-adenosylmethionine synthase</fullName>
        <shortName evidence="1">AdoMet synthase</shortName>
        <ecNumber evidence="1">2.5.1.6</ecNumber>
    </recommendedName>
    <alternativeName>
        <fullName evidence="1">MAT</fullName>
    </alternativeName>
    <alternativeName>
        <fullName evidence="1">Methionine adenosyltransferase</fullName>
    </alternativeName>
</protein>
<sequence>MSEKGRLFTSESVTEGHPDKICDAISDSVLDALLAQDPRSRVAVETLVTTGQVHVVGEVTTTAKEAFADITNTVRERILDIGYDSSDKGFDGASCGVNIGIGAQSPDIAQGVDTAHETRVEGAADPLDAQGAGDQGLMFGYAINDTPERMPLPIALAHRLSRRLTEVRKNGVLPYLRPDGKTQVTIEFEDDVPVRLDTVVISTQHAADIDLENTLTPDIREKVLNTVLNDLAHDTLDTSSTRLLVNPTGKFVVGGPMGDAGLTGRKIIVDTYGGWARHGGGAFSGKDPSKVDRSAAYAMRWVAKNIVAAGLAERVEVQVAYAIGKAAPVGLFIETFGTATVDPVKIEKIVPEVFDLRPGAIIRDLDLLRPIYAQTAAYGHFGRTDVELPWEQLNKVDDLKRAI</sequence>
<name>METK_MYCA1</name>
<keyword id="KW-0002">3D-structure</keyword>
<keyword id="KW-0067">ATP-binding</keyword>
<keyword id="KW-0963">Cytoplasm</keyword>
<keyword id="KW-0460">Magnesium</keyword>
<keyword id="KW-0479">Metal-binding</keyword>
<keyword id="KW-0547">Nucleotide-binding</keyword>
<keyword id="KW-0554">One-carbon metabolism</keyword>
<keyword id="KW-0630">Potassium</keyword>
<keyword id="KW-0808">Transferase</keyword>
<dbReference type="EC" id="2.5.1.6" evidence="1"/>
<dbReference type="EMBL" id="CP000479">
    <property type="protein sequence ID" value="ABK67721.1"/>
    <property type="molecule type" value="Genomic_DNA"/>
</dbReference>
<dbReference type="RefSeq" id="WP_008258192.1">
    <property type="nucleotide sequence ID" value="NC_008595.1"/>
</dbReference>
<dbReference type="PDB" id="3S82">
    <property type="method" value="X-ray"/>
    <property type="resolution" value="1.73 A"/>
    <property type="chains" value="A/B=1-403"/>
</dbReference>
<dbReference type="PDBsum" id="3S82"/>
<dbReference type="SMR" id="A0QI26"/>
<dbReference type="GeneID" id="77301292"/>
<dbReference type="KEGG" id="mav:MAV_3382"/>
<dbReference type="HOGENOM" id="CLU_041802_1_1_11"/>
<dbReference type="UniPathway" id="UPA00315">
    <property type="reaction ID" value="UER00080"/>
</dbReference>
<dbReference type="EvolutionaryTrace" id="A0QI26"/>
<dbReference type="Proteomes" id="UP000001574">
    <property type="component" value="Chromosome"/>
</dbReference>
<dbReference type="GO" id="GO:0005737">
    <property type="term" value="C:cytoplasm"/>
    <property type="evidence" value="ECO:0007669"/>
    <property type="project" value="UniProtKB-SubCell"/>
</dbReference>
<dbReference type="GO" id="GO:0005524">
    <property type="term" value="F:ATP binding"/>
    <property type="evidence" value="ECO:0007669"/>
    <property type="project" value="UniProtKB-UniRule"/>
</dbReference>
<dbReference type="GO" id="GO:0000287">
    <property type="term" value="F:magnesium ion binding"/>
    <property type="evidence" value="ECO:0007669"/>
    <property type="project" value="UniProtKB-UniRule"/>
</dbReference>
<dbReference type="GO" id="GO:0004478">
    <property type="term" value="F:methionine adenosyltransferase activity"/>
    <property type="evidence" value="ECO:0007669"/>
    <property type="project" value="UniProtKB-UniRule"/>
</dbReference>
<dbReference type="GO" id="GO:0006730">
    <property type="term" value="P:one-carbon metabolic process"/>
    <property type="evidence" value="ECO:0007669"/>
    <property type="project" value="UniProtKB-KW"/>
</dbReference>
<dbReference type="GO" id="GO:0006556">
    <property type="term" value="P:S-adenosylmethionine biosynthetic process"/>
    <property type="evidence" value="ECO:0007669"/>
    <property type="project" value="UniProtKB-UniRule"/>
</dbReference>
<dbReference type="CDD" id="cd18079">
    <property type="entry name" value="S-AdoMet_synt"/>
    <property type="match status" value="1"/>
</dbReference>
<dbReference type="FunFam" id="3.30.300.10:FF:000006">
    <property type="entry name" value="S-adenosylmethionine synthase"/>
    <property type="match status" value="1"/>
</dbReference>
<dbReference type="Gene3D" id="3.30.300.10">
    <property type="match status" value="3"/>
</dbReference>
<dbReference type="HAMAP" id="MF_00086">
    <property type="entry name" value="S_AdoMet_synth1"/>
    <property type="match status" value="1"/>
</dbReference>
<dbReference type="InterPro" id="IPR022631">
    <property type="entry name" value="ADOMET_SYNTHASE_CS"/>
</dbReference>
<dbReference type="InterPro" id="IPR022630">
    <property type="entry name" value="S-AdoMet_synt_C"/>
</dbReference>
<dbReference type="InterPro" id="IPR022629">
    <property type="entry name" value="S-AdoMet_synt_central"/>
</dbReference>
<dbReference type="InterPro" id="IPR022628">
    <property type="entry name" value="S-AdoMet_synt_N"/>
</dbReference>
<dbReference type="InterPro" id="IPR002133">
    <property type="entry name" value="S-AdoMet_synthetase"/>
</dbReference>
<dbReference type="InterPro" id="IPR022636">
    <property type="entry name" value="S-AdoMet_synthetase_sfam"/>
</dbReference>
<dbReference type="NCBIfam" id="TIGR01034">
    <property type="entry name" value="metK"/>
    <property type="match status" value="1"/>
</dbReference>
<dbReference type="PANTHER" id="PTHR11964">
    <property type="entry name" value="S-ADENOSYLMETHIONINE SYNTHETASE"/>
    <property type="match status" value="1"/>
</dbReference>
<dbReference type="Pfam" id="PF02773">
    <property type="entry name" value="S-AdoMet_synt_C"/>
    <property type="match status" value="1"/>
</dbReference>
<dbReference type="Pfam" id="PF02772">
    <property type="entry name" value="S-AdoMet_synt_M"/>
    <property type="match status" value="1"/>
</dbReference>
<dbReference type="Pfam" id="PF00438">
    <property type="entry name" value="S-AdoMet_synt_N"/>
    <property type="match status" value="1"/>
</dbReference>
<dbReference type="PIRSF" id="PIRSF000497">
    <property type="entry name" value="MAT"/>
    <property type="match status" value="1"/>
</dbReference>
<dbReference type="SUPFAM" id="SSF55973">
    <property type="entry name" value="S-adenosylmethionine synthetase"/>
    <property type="match status" value="3"/>
</dbReference>
<dbReference type="PROSITE" id="PS00376">
    <property type="entry name" value="ADOMET_SYNTHASE_1"/>
    <property type="match status" value="1"/>
</dbReference>
<dbReference type="PROSITE" id="PS00377">
    <property type="entry name" value="ADOMET_SYNTHASE_2"/>
    <property type="match status" value="1"/>
</dbReference>
<evidence type="ECO:0000255" key="1">
    <source>
        <dbReference type="HAMAP-Rule" id="MF_00086"/>
    </source>
</evidence>
<evidence type="ECO:0007744" key="2">
    <source>
        <dbReference type="PDB" id="3S82"/>
    </source>
</evidence>
<evidence type="ECO:0007829" key="3">
    <source>
        <dbReference type="PDB" id="3S82"/>
    </source>
</evidence>
<gene>
    <name evidence="1" type="primary">metK</name>
    <name type="ordered locus">MAV_3382</name>
</gene>